<protein>
    <recommendedName>
        <fullName evidence="1">Arginine--tRNA ligase</fullName>
        <ecNumber evidence="1">6.1.1.19</ecNumber>
    </recommendedName>
    <alternativeName>
        <fullName evidence="1">Arginyl-tRNA synthetase</fullName>
        <shortName evidence="1">ArgRS</shortName>
    </alternativeName>
</protein>
<name>SYR_THISH</name>
<proteinExistence type="inferred from homology"/>
<accession>B8GU79</accession>
<feature type="chain" id="PRO_1000198940" description="Arginine--tRNA ligase">
    <location>
        <begin position="1"/>
        <end position="586"/>
    </location>
</feature>
<feature type="short sequence motif" description="'HIGH' region">
    <location>
        <begin position="128"/>
        <end position="138"/>
    </location>
</feature>
<gene>
    <name evidence="1" type="primary">argS</name>
    <name type="ordered locus">Tgr7_0263</name>
</gene>
<organism>
    <name type="scientific">Thioalkalivibrio sulfidiphilus (strain HL-EbGR7)</name>
    <dbReference type="NCBI Taxonomy" id="396588"/>
    <lineage>
        <taxon>Bacteria</taxon>
        <taxon>Pseudomonadati</taxon>
        <taxon>Pseudomonadota</taxon>
        <taxon>Gammaproteobacteria</taxon>
        <taxon>Chromatiales</taxon>
        <taxon>Ectothiorhodospiraceae</taxon>
        <taxon>Thioalkalivibrio</taxon>
    </lineage>
</organism>
<dbReference type="EC" id="6.1.1.19" evidence="1"/>
<dbReference type="EMBL" id="CP001339">
    <property type="protein sequence ID" value="ACL71362.1"/>
    <property type="molecule type" value="Genomic_DNA"/>
</dbReference>
<dbReference type="RefSeq" id="WP_012636851.1">
    <property type="nucleotide sequence ID" value="NC_011901.1"/>
</dbReference>
<dbReference type="SMR" id="B8GU79"/>
<dbReference type="STRING" id="396588.Tgr7_0263"/>
<dbReference type="KEGG" id="tgr:Tgr7_0263"/>
<dbReference type="eggNOG" id="COG0018">
    <property type="taxonomic scope" value="Bacteria"/>
</dbReference>
<dbReference type="HOGENOM" id="CLU_006406_0_1_6"/>
<dbReference type="OrthoDB" id="9803211at2"/>
<dbReference type="Proteomes" id="UP000002383">
    <property type="component" value="Chromosome"/>
</dbReference>
<dbReference type="GO" id="GO:0005737">
    <property type="term" value="C:cytoplasm"/>
    <property type="evidence" value="ECO:0007669"/>
    <property type="project" value="UniProtKB-SubCell"/>
</dbReference>
<dbReference type="GO" id="GO:0004814">
    <property type="term" value="F:arginine-tRNA ligase activity"/>
    <property type="evidence" value="ECO:0007669"/>
    <property type="project" value="UniProtKB-UniRule"/>
</dbReference>
<dbReference type="GO" id="GO:0005524">
    <property type="term" value="F:ATP binding"/>
    <property type="evidence" value="ECO:0007669"/>
    <property type="project" value="UniProtKB-UniRule"/>
</dbReference>
<dbReference type="GO" id="GO:0006420">
    <property type="term" value="P:arginyl-tRNA aminoacylation"/>
    <property type="evidence" value="ECO:0007669"/>
    <property type="project" value="UniProtKB-UniRule"/>
</dbReference>
<dbReference type="CDD" id="cd07956">
    <property type="entry name" value="Anticodon_Ia_Arg"/>
    <property type="match status" value="1"/>
</dbReference>
<dbReference type="CDD" id="cd00671">
    <property type="entry name" value="ArgRS_core"/>
    <property type="match status" value="1"/>
</dbReference>
<dbReference type="FunFam" id="1.10.730.10:FF:000008">
    <property type="entry name" value="Arginine--tRNA ligase"/>
    <property type="match status" value="1"/>
</dbReference>
<dbReference type="FunFam" id="3.30.1360.70:FF:000003">
    <property type="entry name" value="Arginine--tRNA ligase"/>
    <property type="match status" value="1"/>
</dbReference>
<dbReference type="Gene3D" id="3.30.1360.70">
    <property type="entry name" value="Arginyl tRNA synthetase N-terminal domain"/>
    <property type="match status" value="1"/>
</dbReference>
<dbReference type="Gene3D" id="3.40.50.620">
    <property type="entry name" value="HUPs"/>
    <property type="match status" value="1"/>
</dbReference>
<dbReference type="Gene3D" id="1.10.730.10">
    <property type="entry name" value="Isoleucyl-tRNA Synthetase, Domain 1"/>
    <property type="match status" value="1"/>
</dbReference>
<dbReference type="HAMAP" id="MF_00123">
    <property type="entry name" value="Arg_tRNA_synth"/>
    <property type="match status" value="1"/>
</dbReference>
<dbReference type="InterPro" id="IPR001412">
    <property type="entry name" value="aa-tRNA-synth_I_CS"/>
</dbReference>
<dbReference type="InterPro" id="IPR001278">
    <property type="entry name" value="Arg-tRNA-ligase"/>
</dbReference>
<dbReference type="InterPro" id="IPR005148">
    <property type="entry name" value="Arg-tRNA-synth_N"/>
</dbReference>
<dbReference type="InterPro" id="IPR036695">
    <property type="entry name" value="Arg-tRNA-synth_N_sf"/>
</dbReference>
<dbReference type="InterPro" id="IPR035684">
    <property type="entry name" value="ArgRS_core"/>
</dbReference>
<dbReference type="InterPro" id="IPR008909">
    <property type="entry name" value="DALR_anticod-bd"/>
</dbReference>
<dbReference type="InterPro" id="IPR014729">
    <property type="entry name" value="Rossmann-like_a/b/a_fold"/>
</dbReference>
<dbReference type="InterPro" id="IPR009080">
    <property type="entry name" value="tRNAsynth_Ia_anticodon-bd"/>
</dbReference>
<dbReference type="NCBIfam" id="TIGR00456">
    <property type="entry name" value="argS"/>
    <property type="match status" value="1"/>
</dbReference>
<dbReference type="PANTHER" id="PTHR11956:SF5">
    <property type="entry name" value="ARGININE--TRNA LIGASE, CYTOPLASMIC"/>
    <property type="match status" value="1"/>
</dbReference>
<dbReference type="PANTHER" id="PTHR11956">
    <property type="entry name" value="ARGINYL-TRNA SYNTHETASE"/>
    <property type="match status" value="1"/>
</dbReference>
<dbReference type="Pfam" id="PF03485">
    <property type="entry name" value="Arg_tRNA_synt_N"/>
    <property type="match status" value="1"/>
</dbReference>
<dbReference type="Pfam" id="PF05746">
    <property type="entry name" value="DALR_1"/>
    <property type="match status" value="1"/>
</dbReference>
<dbReference type="Pfam" id="PF00750">
    <property type="entry name" value="tRNA-synt_1d"/>
    <property type="match status" value="1"/>
</dbReference>
<dbReference type="PRINTS" id="PR01038">
    <property type="entry name" value="TRNASYNTHARG"/>
</dbReference>
<dbReference type="SMART" id="SM01016">
    <property type="entry name" value="Arg_tRNA_synt_N"/>
    <property type="match status" value="1"/>
</dbReference>
<dbReference type="SMART" id="SM00836">
    <property type="entry name" value="DALR_1"/>
    <property type="match status" value="1"/>
</dbReference>
<dbReference type="SUPFAM" id="SSF47323">
    <property type="entry name" value="Anticodon-binding domain of a subclass of class I aminoacyl-tRNA synthetases"/>
    <property type="match status" value="1"/>
</dbReference>
<dbReference type="SUPFAM" id="SSF55190">
    <property type="entry name" value="Arginyl-tRNA synthetase (ArgRS), N-terminal 'additional' domain"/>
    <property type="match status" value="1"/>
</dbReference>
<dbReference type="SUPFAM" id="SSF52374">
    <property type="entry name" value="Nucleotidylyl transferase"/>
    <property type="match status" value="1"/>
</dbReference>
<dbReference type="PROSITE" id="PS00178">
    <property type="entry name" value="AA_TRNA_LIGASE_I"/>
    <property type="match status" value="1"/>
</dbReference>
<evidence type="ECO:0000255" key="1">
    <source>
        <dbReference type="HAMAP-Rule" id="MF_00123"/>
    </source>
</evidence>
<reference key="1">
    <citation type="journal article" date="2011" name="Stand. Genomic Sci.">
        <title>Complete genome sequence of 'Thioalkalivibrio sulfidophilus' HL-EbGr7.</title>
        <authorList>
            <person name="Muyzer G."/>
            <person name="Sorokin D.Y."/>
            <person name="Mavromatis K."/>
            <person name="Lapidus A."/>
            <person name="Clum A."/>
            <person name="Ivanova N."/>
            <person name="Pati A."/>
            <person name="d'Haeseleer P."/>
            <person name="Woyke T."/>
            <person name="Kyrpides N.C."/>
        </authorList>
    </citation>
    <scope>NUCLEOTIDE SEQUENCE [LARGE SCALE GENOMIC DNA]</scope>
    <source>
        <strain>HL-EbGR7</strain>
    </source>
</reference>
<sequence>MKDQLQALIEQAIDALRQDGTLPGDTAVDVQVTRTKDKAHGDFATNVALQLAKPARKKPRDVAEAIVARLPASGLVARTEIAGPGFINLFLGEQAKLSVIATIREQGERYGRSQLGAGKKVQVEFVSANPTGPLHVGHGRGAAYGAAVADLLEAVGFDVHREYYVNDAGRQMDILGTSVWLRYLELTGVELPFPTNAYRGDYVYDIAATLHREHGDHYKREAAEILDGLPPDEPDGGDKEEYIDAMIARAKELLGDNHYRFVFELGLNVILDDIRDDLAEFGVTYDTWYSERSLTDKGAVNLAIERLREAGHLYEKDGALWFRSTDFGDEKDRVVQRDNGQTTYFASDIAYHMDKMERGYDRVIDVWGADHHGYVPRVKAALKALGEDETRLDVLLVQFAILYRGGERVQMSTRSGSFVTLRELREEVGKDAARFFYVMRRCEQHLDFDLDLAKSQSADNPVYYIQYAHARVCSVLRQMEAKGLKHDPSHGEAKLSLLTESHEQEILATLARFPEVIEAAALVEEPHQIANYLRELANDFHTYYNAHQFLVDEPAIRDARLSLILAVRQVIANGLGLLGVSAPQEM</sequence>
<comment type="catalytic activity">
    <reaction evidence="1">
        <text>tRNA(Arg) + L-arginine + ATP = L-arginyl-tRNA(Arg) + AMP + diphosphate</text>
        <dbReference type="Rhea" id="RHEA:20301"/>
        <dbReference type="Rhea" id="RHEA-COMP:9658"/>
        <dbReference type="Rhea" id="RHEA-COMP:9673"/>
        <dbReference type="ChEBI" id="CHEBI:30616"/>
        <dbReference type="ChEBI" id="CHEBI:32682"/>
        <dbReference type="ChEBI" id="CHEBI:33019"/>
        <dbReference type="ChEBI" id="CHEBI:78442"/>
        <dbReference type="ChEBI" id="CHEBI:78513"/>
        <dbReference type="ChEBI" id="CHEBI:456215"/>
        <dbReference type="EC" id="6.1.1.19"/>
    </reaction>
</comment>
<comment type="subunit">
    <text evidence="1">Monomer.</text>
</comment>
<comment type="subcellular location">
    <subcellularLocation>
        <location evidence="1">Cytoplasm</location>
    </subcellularLocation>
</comment>
<comment type="similarity">
    <text evidence="1">Belongs to the class-I aminoacyl-tRNA synthetase family.</text>
</comment>
<keyword id="KW-0030">Aminoacyl-tRNA synthetase</keyword>
<keyword id="KW-0067">ATP-binding</keyword>
<keyword id="KW-0963">Cytoplasm</keyword>
<keyword id="KW-0436">Ligase</keyword>
<keyword id="KW-0547">Nucleotide-binding</keyword>
<keyword id="KW-0648">Protein biosynthesis</keyword>
<keyword id="KW-1185">Reference proteome</keyword>